<comment type="function">
    <text evidence="1">Catalyzes the ATP-dependent conversion of 7-carboxy-7-deazaguanine (CDG) to 7-cyano-7-deazaguanine (preQ(0)).</text>
</comment>
<comment type="catalytic activity">
    <reaction evidence="1">
        <text>7-carboxy-7-deazaguanine + NH4(+) + ATP = 7-cyano-7-deazaguanine + ADP + phosphate + H2O + H(+)</text>
        <dbReference type="Rhea" id="RHEA:27982"/>
        <dbReference type="ChEBI" id="CHEBI:15377"/>
        <dbReference type="ChEBI" id="CHEBI:15378"/>
        <dbReference type="ChEBI" id="CHEBI:28938"/>
        <dbReference type="ChEBI" id="CHEBI:30616"/>
        <dbReference type="ChEBI" id="CHEBI:43474"/>
        <dbReference type="ChEBI" id="CHEBI:45075"/>
        <dbReference type="ChEBI" id="CHEBI:61036"/>
        <dbReference type="ChEBI" id="CHEBI:456216"/>
        <dbReference type="EC" id="6.3.4.20"/>
    </reaction>
</comment>
<comment type="cofactor">
    <cofactor evidence="1">
        <name>Zn(2+)</name>
        <dbReference type="ChEBI" id="CHEBI:29105"/>
    </cofactor>
    <text evidence="1">Binds 1 zinc ion per subunit.</text>
</comment>
<comment type="pathway">
    <text evidence="1">Purine metabolism; 7-cyano-7-deazaguanine biosynthesis.</text>
</comment>
<comment type="similarity">
    <text evidence="1">Belongs to the QueC family.</text>
</comment>
<feature type="chain" id="PRO_1000069789" description="7-cyano-7-deazaguanine synthase">
    <location>
        <begin position="1"/>
        <end position="224"/>
    </location>
</feature>
<feature type="binding site" evidence="1">
    <location>
        <begin position="12"/>
        <end position="22"/>
    </location>
    <ligand>
        <name>ATP</name>
        <dbReference type="ChEBI" id="CHEBI:30616"/>
    </ligand>
</feature>
<feature type="binding site" evidence="1">
    <location>
        <position position="193"/>
    </location>
    <ligand>
        <name>Zn(2+)</name>
        <dbReference type="ChEBI" id="CHEBI:29105"/>
    </ligand>
</feature>
<feature type="binding site" evidence="1">
    <location>
        <position position="201"/>
    </location>
    <ligand>
        <name>Zn(2+)</name>
        <dbReference type="ChEBI" id="CHEBI:29105"/>
    </ligand>
</feature>
<feature type="binding site" evidence="1">
    <location>
        <position position="204"/>
    </location>
    <ligand>
        <name>Zn(2+)</name>
        <dbReference type="ChEBI" id="CHEBI:29105"/>
    </ligand>
</feature>
<feature type="binding site" evidence="1">
    <location>
        <position position="207"/>
    </location>
    <ligand>
        <name>Zn(2+)</name>
        <dbReference type="ChEBI" id="CHEBI:29105"/>
    </ligand>
</feature>
<reference key="1">
    <citation type="journal article" date="2007" name="PLoS Genet.">
        <title>Patterns and implications of gene gain and loss in the evolution of Prochlorococcus.</title>
        <authorList>
            <person name="Kettler G.C."/>
            <person name="Martiny A.C."/>
            <person name="Huang K."/>
            <person name="Zucker J."/>
            <person name="Coleman M.L."/>
            <person name="Rodrigue S."/>
            <person name="Chen F."/>
            <person name="Lapidus A."/>
            <person name="Ferriera S."/>
            <person name="Johnson J."/>
            <person name="Steglich C."/>
            <person name="Church G.M."/>
            <person name="Richardson P."/>
            <person name="Chisholm S.W."/>
        </authorList>
    </citation>
    <scope>NUCLEOTIDE SEQUENCE [LARGE SCALE GENOMIC DNA]</scope>
    <source>
        <strain>MIT 9515</strain>
    </source>
</reference>
<dbReference type="EC" id="6.3.4.20" evidence="1"/>
<dbReference type="EMBL" id="CP000552">
    <property type="protein sequence ID" value="ABM73089.1"/>
    <property type="molecule type" value="Genomic_DNA"/>
</dbReference>
<dbReference type="RefSeq" id="WP_011821173.1">
    <property type="nucleotide sequence ID" value="NC_008817.1"/>
</dbReference>
<dbReference type="SMR" id="A2BZ78"/>
<dbReference type="STRING" id="167542.P9515_18821"/>
<dbReference type="GeneID" id="60201272"/>
<dbReference type="KEGG" id="pmc:P9515_18821"/>
<dbReference type="eggNOG" id="COG0603">
    <property type="taxonomic scope" value="Bacteria"/>
</dbReference>
<dbReference type="HOGENOM" id="CLU_081854_1_0_3"/>
<dbReference type="OrthoDB" id="9789567at2"/>
<dbReference type="UniPathway" id="UPA00391"/>
<dbReference type="Proteomes" id="UP000001589">
    <property type="component" value="Chromosome"/>
</dbReference>
<dbReference type="GO" id="GO:0005524">
    <property type="term" value="F:ATP binding"/>
    <property type="evidence" value="ECO:0007669"/>
    <property type="project" value="UniProtKB-UniRule"/>
</dbReference>
<dbReference type="GO" id="GO:0016879">
    <property type="term" value="F:ligase activity, forming carbon-nitrogen bonds"/>
    <property type="evidence" value="ECO:0007669"/>
    <property type="project" value="UniProtKB-UniRule"/>
</dbReference>
<dbReference type="GO" id="GO:0008270">
    <property type="term" value="F:zinc ion binding"/>
    <property type="evidence" value="ECO:0007669"/>
    <property type="project" value="UniProtKB-UniRule"/>
</dbReference>
<dbReference type="GO" id="GO:0008616">
    <property type="term" value="P:queuosine biosynthetic process"/>
    <property type="evidence" value="ECO:0007669"/>
    <property type="project" value="UniProtKB-UniRule"/>
</dbReference>
<dbReference type="CDD" id="cd01995">
    <property type="entry name" value="QueC-like"/>
    <property type="match status" value="1"/>
</dbReference>
<dbReference type="Gene3D" id="3.40.50.620">
    <property type="entry name" value="HUPs"/>
    <property type="match status" value="1"/>
</dbReference>
<dbReference type="HAMAP" id="MF_01633">
    <property type="entry name" value="QueC"/>
    <property type="match status" value="1"/>
</dbReference>
<dbReference type="InterPro" id="IPR018317">
    <property type="entry name" value="QueC"/>
</dbReference>
<dbReference type="InterPro" id="IPR014729">
    <property type="entry name" value="Rossmann-like_a/b/a_fold"/>
</dbReference>
<dbReference type="NCBIfam" id="TIGR00364">
    <property type="entry name" value="7-cyano-7-deazaguanine synthase QueC"/>
    <property type="match status" value="1"/>
</dbReference>
<dbReference type="PANTHER" id="PTHR42914">
    <property type="entry name" value="7-CYANO-7-DEAZAGUANINE SYNTHASE"/>
    <property type="match status" value="1"/>
</dbReference>
<dbReference type="PANTHER" id="PTHR42914:SF1">
    <property type="entry name" value="7-CYANO-7-DEAZAGUANINE SYNTHASE"/>
    <property type="match status" value="1"/>
</dbReference>
<dbReference type="Pfam" id="PF06508">
    <property type="entry name" value="QueC"/>
    <property type="match status" value="1"/>
</dbReference>
<dbReference type="PIRSF" id="PIRSF006293">
    <property type="entry name" value="ExsB"/>
    <property type="match status" value="1"/>
</dbReference>
<dbReference type="SUPFAM" id="SSF52402">
    <property type="entry name" value="Adenine nucleotide alpha hydrolases-like"/>
    <property type="match status" value="1"/>
</dbReference>
<proteinExistence type="inferred from homology"/>
<protein>
    <recommendedName>
        <fullName evidence="1">7-cyano-7-deazaguanine synthase</fullName>
        <ecNumber evidence="1">6.3.4.20</ecNumber>
    </recommendedName>
    <alternativeName>
        <fullName evidence="1">7-cyano-7-carbaguanine synthase</fullName>
    </alternativeName>
    <alternativeName>
        <fullName evidence="1">PreQ(0) synthase</fullName>
    </alternativeName>
    <alternativeName>
        <fullName evidence="1">Queuosine biosynthesis protein QueC</fullName>
    </alternativeName>
</protein>
<keyword id="KW-0067">ATP-binding</keyword>
<keyword id="KW-0436">Ligase</keyword>
<keyword id="KW-0479">Metal-binding</keyword>
<keyword id="KW-0547">Nucleotide-binding</keyword>
<keyword id="KW-0671">Queuosine biosynthesis</keyword>
<keyword id="KW-0862">Zinc</keyword>
<evidence type="ECO:0000255" key="1">
    <source>
        <dbReference type="HAMAP-Rule" id="MF_01633"/>
    </source>
</evidence>
<name>QUEC_PROM5</name>
<sequence length="224" mass="25067">MNLENKSAVILLSGGLDSSTVTGLAKASKAKIFGLSFDYGQRHKKELNSALTIAKHFAIEEFKIVKLDLSLWGGSSLTDTKKDLPIEGVQLNTIPNTYVPGRNTIFISVALSYAEAINADLIGLGVNALDYSGYPDCRPDYIKKFQELAYLANKRGREDNPIKLWTPLIDLNKEDIIQLAFDHNVPLEKTWSCYSGNLKPCGKCDSCRIRQTAYKKWQIKQNEY</sequence>
<organism>
    <name type="scientific">Prochlorococcus marinus (strain MIT 9515)</name>
    <dbReference type="NCBI Taxonomy" id="167542"/>
    <lineage>
        <taxon>Bacteria</taxon>
        <taxon>Bacillati</taxon>
        <taxon>Cyanobacteriota</taxon>
        <taxon>Cyanophyceae</taxon>
        <taxon>Synechococcales</taxon>
        <taxon>Prochlorococcaceae</taxon>
        <taxon>Prochlorococcus</taxon>
    </lineage>
</organism>
<gene>
    <name evidence="1" type="primary">queC</name>
    <name type="ordered locus">P9515_18821</name>
</gene>
<accession>A2BZ78</accession>